<reference key="1">
    <citation type="journal article" date="1988" name="Mol. Cell. Biol.">
        <title>Regulatory myosin light-chain genes of Caenorhabditis elegans.</title>
        <authorList>
            <person name="Cummins C."/>
            <person name="Anderson P."/>
        </authorList>
    </citation>
    <scope>NUCLEOTIDE SEQUENCE [GENOMIC DNA]</scope>
    <source>
        <strain>Bristol N2</strain>
    </source>
</reference>
<reference key="2">
    <citation type="journal article" date="1998" name="Science">
        <title>Genome sequence of the nematode C. elegans: a platform for investigating biology.</title>
        <authorList>
            <consortium name="The C. elegans sequencing consortium"/>
        </authorList>
    </citation>
    <scope>NUCLEOTIDE SEQUENCE [LARGE SCALE GENOMIC DNA]</scope>
    <source>
        <strain>Bristol N2</strain>
    </source>
</reference>
<dbReference type="EMBL" id="M23365">
    <property type="protein sequence ID" value="AAA28113.1"/>
    <property type="molecule type" value="Genomic_DNA"/>
</dbReference>
<dbReference type="EMBL" id="FO080802">
    <property type="protein sequence ID" value="CCD66901.1"/>
    <property type="molecule type" value="Genomic_DNA"/>
</dbReference>
<dbReference type="PIR" id="A31377">
    <property type="entry name" value="A31377"/>
</dbReference>
<dbReference type="RefSeq" id="NP_510829.2">
    <property type="nucleotide sequence ID" value="NM_078428.8"/>
</dbReference>
<dbReference type="SMR" id="P19625"/>
<dbReference type="BioGRID" id="46651">
    <property type="interactions" value="10"/>
</dbReference>
<dbReference type="FunCoup" id="P19625">
    <property type="interactions" value="16"/>
</dbReference>
<dbReference type="STRING" id="6239.C36E6.3.1"/>
<dbReference type="iPTMnet" id="P19625"/>
<dbReference type="PaxDb" id="6239-C36E6.3"/>
<dbReference type="PeptideAtlas" id="P19625"/>
<dbReference type="EnsemblMetazoa" id="C36E6.3.1">
    <property type="protein sequence ID" value="C36E6.3.1"/>
    <property type="gene ID" value="WBGene00003369"/>
</dbReference>
<dbReference type="GeneID" id="181776"/>
<dbReference type="KEGG" id="cel:CELE_C36E6.3"/>
<dbReference type="UCSC" id="C36E6.3">
    <property type="organism name" value="c. elegans"/>
</dbReference>
<dbReference type="AGR" id="WB:WBGene00003369"/>
<dbReference type="CTD" id="181776"/>
<dbReference type="WormBase" id="C36E6.3">
    <property type="protein sequence ID" value="CE34269"/>
    <property type="gene ID" value="WBGene00003369"/>
    <property type="gene designation" value="mlc-1"/>
</dbReference>
<dbReference type="eggNOG" id="KOG0031">
    <property type="taxonomic scope" value="Eukaryota"/>
</dbReference>
<dbReference type="GeneTree" id="ENSGT00970000196646"/>
<dbReference type="HOGENOM" id="CLU_061288_9_3_1"/>
<dbReference type="InParanoid" id="P19625"/>
<dbReference type="OMA" id="KDLYAMM"/>
<dbReference type="OrthoDB" id="429467at2759"/>
<dbReference type="PhylomeDB" id="P19625"/>
<dbReference type="Reactome" id="R-CEL-445355">
    <property type="pathway name" value="Smooth Muscle Contraction"/>
</dbReference>
<dbReference type="Reactome" id="R-CEL-5627123">
    <property type="pathway name" value="RHO GTPases activate PAKs"/>
</dbReference>
<dbReference type="PRO" id="PR:P19625"/>
<dbReference type="Proteomes" id="UP000001940">
    <property type="component" value="Chromosome X"/>
</dbReference>
<dbReference type="Bgee" id="WBGene00003369">
    <property type="expression patterns" value="Expressed in larva and 10 other cell types or tissues"/>
</dbReference>
<dbReference type="GO" id="GO:0005737">
    <property type="term" value="C:cytoplasm"/>
    <property type="evidence" value="ECO:0000318"/>
    <property type="project" value="GO_Central"/>
</dbReference>
<dbReference type="GO" id="GO:0005859">
    <property type="term" value="C:muscle myosin complex"/>
    <property type="evidence" value="ECO:0000314"/>
    <property type="project" value="WormBase"/>
</dbReference>
<dbReference type="GO" id="GO:0016460">
    <property type="term" value="C:myosin II complex"/>
    <property type="evidence" value="ECO:0000318"/>
    <property type="project" value="GO_Central"/>
</dbReference>
<dbReference type="GO" id="GO:0005509">
    <property type="term" value="F:calcium ion binding"/>
    <property type="evidence" value="ECO:0007669"/>
    <property type="project" value="InterPro"/>
</dbReference>
<dbReference type="GO" id="GO:0032036">
    <property type="term" value="F:myosin heavy chain binding"/>
    <property type="evidence" value="ECO:0000318"/>
    <property type="project" value="GO_Central"/>
</dbReference>
<dbReference type="GO" id="GO:0040011">
    <property type="term" value="P:locomotion"/>
    <property type="evidence" value="ECO:0000316"/>
    <property type="project" value="WormBase"/>
</dbReference>
<dbReference type="GO" id="GO:0007517">
    <property type="term" value="P:muscle organ development"/>
    <property type="evidence" value="ECO:0000316"/>
    <property type="project" value="WormBase"/>
</dbReference>
<dbReference type="GO" id="GO:0002119">
    <property type="term" value="P:nematode larval development"/>
    <property type="evidence" value="ECO:0000316"/>
    <property type="project" value="WormBase"/>
</dbReference>
<dbReference type="GO" id="GO:0006937">
    <property type="term" value="P:regulation of muscle contraction"/>
    <property type="evidence" value="ECO:0000316"/>
    <property type="project" value="WormBase"/>
</dbReference>
<dbReference type="CDD" id="cd00051">
    <property type="entry name" value="EFh"/>
    <property type="match status" value="1"/>
</dbReference>
<dbReference type="FunFam" id="1.10.238.10:FF:000324">
    <property type="entry name" value="EF hand"/>
    <property type="match status" value="1"/>
</dbReference>
<dbReference type="FunFam" id="1.10.238.10:FF:000007">
    <property type="entry name" value="Putative myosin regulatory light chain sqh"/>
    <property type="match status" value="1"/>
</dbReference>
<dbReference type="Gene3D" id="1.10.238.10">
    <property type="entry name" value="EF-hand"/>
    <property type="match status" value="2"/>
</dbReference>
<dbReference type="InterPro" id="IPR011992">
    <property type="entry name" value="EF-hand-dom_pair"/>
</dbReference>
<dbReference type="InterPro" id="IPR018247">
    <property type="entry name" value="EF_Hand_1_Ca_BS"/>
</dbReference>
<dbReference type="InterPro" id="IPR002048">
    <property type="entry name" value="EF_hand_dom"/>
</dbReference>
<dbReference type="InterPro" id="IPR050403">
    <property type="entry name" value="Myosin_RLC"/>
</dbReference>
<dbReference type="PANTHER" id="PTHR23049">
    <property type="entry name" value="MYOSIN REGULATORY LIGHT CHAIN 2"/>
    <property type="match status" value="1"/>
</dbReference>
<dbReference type="Pfam" id="PF13405">
    <property type="entry name" value="EF-hand_6"/>
    <property type="match status" value="1"/>
</dbReference>
<dbReference type="SMART" id="SM00054">
    <property type="entry name" value="EFh"/>
    <property type="match status" value="2"/>
</dbReference>
<dbReference type="SUPFAM" id="SSF47473">
    <property type="entry name" value="EF-hand"/>
    <property type="match status" value="1"/>
</dbReference>
<dbReference type="PROSITE" id="PS00018">
    <property type="entry name" value="EF_HAND_1"/>
    <property type="match status" value="1"/>
</dbReference>
<dbReference type="PROSITE" id="PS50222">
    <property type="entry name" value="EF_HAND_2"/>
    <property type="match status" value="2"/>
</dbReference>
<sequence length="170" mass="18617">MSKAAKKKSSKKRSGSEAAQFDQKTIQEFKEAFGIMDQNKDGIIDKSDLKDLYASMGQIAPDSQIDAMIKEASGPINFTVFLTLFGERLTGTDPEATIIGAFAMFDKKDCGKIKEDDLIKILQNKRGEPLDEDEVKAMYKGKPPIEGGEVDYKAFAHLITTGAQDELASA</sequence>
<feature type="chain" id="PRO_0000198760" description="Myosin regulatory light chain 1">
    <location>
        <begin position="1"/>
        <end position="170"/>
    </location>
</feature>
<feature type="domain" description="EF-hand 1" evidence="1">
    <location>
        <begin position="24"/>
        <end position="59"/>
    </location>
</feature>
<feature type="domain" description="EF-hand 2" evidence="1">
    <location>
        <begin position="93"/>
        <end position="128"/>
    </location>
</feature>
<feature type="region of interest" description="Disordered" evidence="2">
    <location>
        <begin position="1"/>
        <end position="22"/>
    </location>
</feature>
<feature type="compositionally biased region" description="Basic residues" evidence="2">
    <location>
        <begin position="1"/>
        <end position="13"/>
    </location>
</feature>
<feature type="binding site" evidence="1">
    <location>
        <position position="37"/>
    </location>
    <ligand>
        <name>Ca(2+)</name>
        <dbReference type="ChEBI" id="CHEBI:29108"/>
    </ligand>
</feature>
<feature type="binding site" evidence="1">
    <location>
        <position position="39"/>
    </location>
    <ligand>
        <name>Ca(2+)</name>
        <dbReference type="ChEBI" id="CHEBI:29108"/>
    </ligand>
</feature>
<feature type="binding site" evidence="1">
    <location>
        <position position="41"/>
    </location>
    <ligand>
        <name>Ca(2+)</name>
        <dbReference type="ChEBI" id="CHEBI:29108"/>
    </ligand>
</feature>
<feature type="binding site" evidence="1">
    <location>
        <position position="48"/>
    </location>
    <ligand>
        <name>Ca(2+)</name>
        <dbReference type="ChEBI" id="CHEBI:29108"/>
    </ligand>
</feature>
<proteinExistence type="predicted"/>
<comment type="subunit">
    <text>Myosin is a hexamer of 2 heavy chains and 4 light chains (two regulatory light chains and two essential light chains).</text>
</comment>
<comment type="miscellaneous">
    <text>This chain binds calcium.</text>
</comment>
<name>MLR1_CAEEL</name>
<keyword id="KW-0106">Calcium</keyword>
<keyword id="KW-0479">Metal-binding</keyword>
<keyword id="KW-0505">Motor protein</keyword>
<keyword id="KW-0514">Muscle protein</keyword>
<keyword id="KW-0518">Myosin</keyword>
<keyword id="KW-1185">Reference proteome</keyword>
<keyword id="KW-0677">Repeat</keyword>
<evidence type="ECO:0000255" key="1">
    <source>
        <dbReference type="PROSITE-ProRule" id="PRU00448"/>
    </source>
</evidence>
<evidence type="ECO:0000256" key="2">
    <source>
        <dbReference type="SAM" id="MobiDB-lite"/>
    </source>
</evidence>
<organism>
    <name type="scientific">Caenorhabditis elegans</name>
    <dbReference type="NCBI Taxonomy" id="6239"/>
    <lineage>
        <taxon>Eukaryota</taxon>
        <taxon>Metazoa</taxon>
        <taxon>Ecdysozoa</taxon>
        <taxon>Nematoda</taxon>
        <taxon>Chromadorea</taxon>
        <taxon>Rhabditida</taxon>
        <taxon>Rhabditina</taxon>
        <taxon>Rhabditomorpha</taxon>
        <taxon>Rhabditoidea</taxon>
        <taxon>Rhabditidae</taxon>
        <taxon>Peloderinae</taxon>
        <taxon>Caenorhabditis</taxon>
    </lineage>
</organism>
<gene>
    <name type="primary">mlc-1</name>
    <name type="ORF">C36E6.3</name>
</gene>
<accession>P19625</accession>
<accession>Q9BL98</accession>
<protein>
    <recommendedName>
        <fullName>Myosin regulatory light chain 1</fullName>
    </recommendedName>
</protein>